<organism>
    <name type="scientific">Bacillus cereus (strain ZK / E33L)</name>
    <dbReference type="NCBI Taxonomy" id="288681"/>
    <lineage>
        <taxon>Bacteria</taxon>
        <taxon>Bacillati</taxon>
        <taxon>Bacillota</taxon>
        <taxon>Bacilli</taxon>
        <taxon>Bacillales</taxon>
        <taxon>Bacillaceae</taxon>
        <taxon>Bacillus</taxon>
        <taxon>Bacillus cereus group</taxon>
    </lineage>
</organism>
<reference key="1">
    <citation type="journal article" date="2006" name="J. Bacteriol.">
        <title>Pathogenomic sequence analysis of Bacillus cereus and Bacillus thuringiensis isolates closely related to Bacillus anthracis.</title>
        <authorList>
            <person name="Han C.S."/>
            <person name="Xie G."/>
            <person name="Challacombe J.F."/>
            <person name="Altherr M.R."/>
            <person name="Bhotika S.S."/>
            <person name="Bruce D."/>
            <person name="Campbell C.S."/>
            <person name="Campbell M.L."/>
            <person name="Chen J."/>
            <person name="Chertkov O."/>
            <person name="Cleland C."/>
            <person name="Dimitrijevic M."/>
            <person name="Doggett N.A."/>
            <person name="Fawcett J.J."/>
            <person name="Glavina T."/>
            <person name="Goodwin L.A."/>
            <person name="Hill K.K."/>
            <person name="Hitchcock P."/>
            <person name="Jackson P.J."/>
            <person name="Keim P."/>
            <person name="Kewalramani A.R."/>
            <person name="Longmire J."/>
            <person name="Lucas S."/>
            <person name="Malfatti S."/>
            <person name="McMurry K."/>
            <person name="Meincke L.J."/>
            <person name="Misra M."/>
            <person name="Moseman B.L."/>
            <person name="Mundt M."/>
            <person name="Munk A.C."/>
            <person name="Okinaka R.T."/>
            <person name="Parson-Quintana B."/>
            <person name="Reilly L.P."/>
            <person name="Richardson P."/>
            <person name="Robinson D.L."/>
            <person name="Rubin E."/>
            <person name="Saunders E."/>
            <person name="Tapia R."/>
            <person name="Tesmer J.G."/>
            <person name="Thayer N."/>
            <person name="Thompson L.S."/>
            <person name="Tice H."/>
            <person name="Ticknor L.O."/>
            <person name="Wills P.L."/>
            <person name="Brettin T.S."/>
            <person name="Gilna P."/>
        </authorList>
    </citation>
    <scope>NUCLEOTIDE SEQUENCE [LARGE SCALE GENOMIC DNA]</scope>
    <source>
        <strain>ZK / E33L</strain>
    </source>
</reference>
<proteinExistence type="inferred from homology"/>
<evidence type="ECO:0000255" key="1">
    <source>
        <dbReference type="HAMAP-Rule" id="MF_00210"/>
    </source>
</evidence>
<accession>Q63A07</accession>
<gene>
    <name evidence="1" type="primary">aroA</name>
    <name type="ordered locus">BCE33L2673</name>
</gene>
<feature type="chain" id="PRO_0000088221" description="3-phosphoshikimate 1-carboxyvinyltransferase">
    <location>
        <begin position="1"/>
        <end position="429"/>
    </location>
</feature>
<feature type="active site" description="Proton acceptor" evidence="1">
    <location>
        <position position="316"/>
    </location>
</feature>
<feature type="binding site" evidence="1">
    <location>
        <position position="23"/>
    </location>
    <ligand>
        <name>3-phosphoshikimate</name>
        <dbReference type="ChEBI" id="CHEBI:145989"/>
    </ligand>
</feature>
<feature type="binding site" evidence="1">
    <location>
        <position position="23"/>
    </location>
    <ligand>
        <name>phosphoenolpyruvate</name>
        <dbReference type="ChEBI" id="CHEBI:58702"/>
    </ligand>
</feature>
<feature type="binding site" evidence="1">
    <location>
        <position position="24"/>
    </location>
    <ligand>
        <name>3-phosphoshikimate</name>
        <dbReference type="ChEBI" id="CHEBI:145989"/>
    </ligand>
</feature>
<feature type="binding site" evidence="1">
    <location>
        <position position="28"/>
    </location>
    <ligand>
        <name>3-phosphoshikimate</name>
        <dbReference type="ChEBI" id="CHEBI:145989"/>
    </ligand>
</feature>
<feature type="binding site" evidence="1">
    <location>
        <position position="95"/>
    </location>
    <ligand>
        <name>phosphoenolpyruvate</name>
        <dbReference type="ChEBI" id="CHEBI:58702"/>
    </ligand>
</feature>
<feature type="binding site" evidence="1">
    <location>
        <position position="123"/>
    </location>
    <ligand>
        <name>phosphoenolpyruvate</name>
        <dbReference type="ChEBI" id="CHEBI:58702"/>
    </ligand>
</feature>
<feature type="binding site" evidence="1">
    <location>
        <position position="168"/>
    </location>
    <ligand>
        <name>3-phosphoshikimate</name>
        <dbReference type="ChEBI" id="CHEBI:145989"/>
    </ligand>
</feature>
<feature type="binding site" evidence="1">
    <location>
        <position position="170"/>
    </location>
    <ligand>
        <name>3-phosphoshikimate</name>
        <dbReference type="ChEBI" id="CHEBI:145989"/>
    </ligand>
</feature>
<feature type="binding site" evidence="1">
    <location>
        <position position="170"/>
    </location>
    <ligand>
        <name>phosphoenolpyruvate</name>
        <dbReference type="ChEBI" id="CHEBI:58702"/>
    </ligand>
</feature>
<feature type="binding site" evidence="1">
    <location>
        <position position="316"/>
    </location>
    <ligand>
        <name>3-phosphoshikimate</name>
        <dbReference type="ChEBI" id="CHEBI:145989"/>
    </ligand>
</feature>
<feature type="binding site" evidence="1">
    <location>
        <position position="343"/>
    </location>
    <ligand>
        <name>3-phosphoshikimate</name>
        <dbReference type="ChEBI" id="CHEBI:145989"/>
    </ligand>
</feature>
<feature type="binding site" evidence="1">
    <location>
        <position position="347"/>
    </location>
    <ligand>
        <name>phosphoenolpyruvate</name>
        <dbReference type="ChEBI" id="CHEBI:58702"/>
    </ligand>
</feature>
<feature type="binding site" evidence="1">
    <location>
        <position position="389"/>
    </location>
    <ligand>
        <name>phosphoenolpyruvate</name>
        <dbReference type="ChEBI" id="CHEBI:58702"/>
    </ligand>
</feature>
<dbReference type="EC" id="2.5.1.19" evidence="1"/>
<dbReference type="EMBL" id="CP000001">
    <property type="protein sequence ID" value="AAU17588.1"/>
    <property type="molecule type" value="Genomic_DNA"/>
</dbReference>
<dbReference type="RefSeq" id="WP_000664607.1">
    <property type="nucleotide sequence ID" value="NC_006274.1"/>
</dbReference>
<dbReference type="SMR" id="Q63A07"/>
<dbReference type="KEGG" id="bcz:BCE33L2673"/>
<dbReference type="PATRIC" id="fig|288681.22.peg.2790"/>
<dbReference type="UniPathway" id="UPA00053">
    <property type="reaction ID" value="UER00089"/>
</dbReference>
<dbReference type="Proteomes" id="UP000002612">
    <property type="component" value="Chromosome"/>
</dbReference>
<dbReference type="GO" id="GO:0005737">
    <property type="term" value="C:cytoplasm"/>
    <property type="evidence" value="ECO:0007669"/>
    <property type="project" value="UniProtKB-SubCell"/>
</dbReference>
<dbReference type="GO" id="GO:0003866">
    <property type="term" value="F:3-phosphoshikimate 1-carboxyvinyltransferase activity"/>
    <property type="evidence" value="ECO:0007669"/>
    <property type="project" value="UniProtKB-UniRule"/>
</dbReference>
<dbReference type="GO" id="GO:0008652">
    <property type="term" value="P:amino acid biosynthetic process"/>
    <property type="evidence" value="ECO:0007669"/>
    <property type="project" value="UniProtKB-KW"/>
</dbReference>
<dbReference type="GO" id="GO:0009073">
    <property type="term" value="P:aromatic amino acid family biosynthetic process"/>
    <property type="evidence" value="ECO:0007669"/>
    <property type="project" value="UniProtKB-KW"/>
</dbReference>
<dbReference type="GO" id="GO:0009423">
    <property type="term" value="P:chorismate biosynthetic process"/>
    <property type="evidence" value="ECO:0007669"/>
    <property type="project" value="UniProtKB-UniRule"/>
</dbReference>
<dbReference type="CDD" id="cd01556">
    <property type="entry name" value="EPSP_synthase"/>
    <property type="match status" value="1"/>
</dbReference>
<dbReference type="FunFam" id="3.65.10.10:FF:000005">
    <property type="entry name" value="3-phosphoshikimate 1-carboxyvinyltransferase"/>
    <property type="match status" value="1"/>
</dbReference>
<dbReference type="Gene3D" id="3.65.10.10">
    <property type="entry name" value="Enolpyruvate transferase domain"/>
    <property type="match status" value="2"/>
</dbReference>
<dbReference type="HAMAP" id="MF_00210">
    <property type="entry name" value="EPSP_synth"/>
    <property type="match status" value="1"/>
</dbReference>
<dbReference type="InterPro" id="IPR001986">
    <property type="entry name" value="Enolpyruvate_Tfrase_dom"/>
</dbReference>
<dbReference type="InterPro" id="IPR036968">
    <property type="entry name" value="Enolpyruvate_Tfrase_sf"/>
</dbReference>
<dbReference type="InterPro" id="IPR006264">
    <property type="entry name" value="EPSP_synthase"/>
</dbReference>
<dbReference type="InterPro" id="IPR023193">
    <property type="entry name" value="EPSP_synthase_CS"/>
</dbReference>
<dbReference type="InterPro" id="IPR013792">
    <property type="entry name" value="RNA3'P_cycl/enolpyr_Trfase_a/b"/>
</dbReference>
<dbReference type="NCBIfam" id="TIGR01356">
    <property type="entry name" value="aroA"/>
    <property type="match status" value="1"/>
</dbReference>
<dbReference type="PANTHER" id="PTHR21090">
    <property type="entry name" value="AROM/DEHYDROQUINATE SYNTHASE"/>
    <property type="match status" value="1"/>
</dbReference>
<dbReference type="PANTHER" id="PTHR21090:SF5">
    <property type="entry name" value="PENTAFUNCTIONAL AROM POLYPEPTIDE"/>
    <property type="match status" value="1"/>
</dbReference>
<dbReference type="Pfam" id="PF00275">
    <property type="entry name" value="EPSP_synthase"/>
    <property type="match status" value="1"/>
</dbReference>
<dbReference type="PIRSF" id="PIRSF000505">
    <property type="entry name" value="EPSPS"/>
    <property type="match status" value="1"/>
</dbReference>
<dbReference type="SUPFAM" id="SSF55205">
    <property type="entry name" value="EPT/RTPC-like"/>
    <property type="match status" value="1"/>
</dbReference>
<dbReference type="PROSITE" id="PS00104">
    <property type="entry name" value="EPSP_SYNTHASE_1"/>
    <property type="match status" value="1"/>
</dbReference>
<dbReference type="PROSITE" id="PS00885">
    <property type="entry name" value="EPSP_SYNTHASE_2"/>
    <property type="match status" value="1"/>
</dbReference>
<name>AROA_BACCZ</name>
<protein>
    <recommendedName>
        <fullName evidence="1">3-phosphoshikimate 1-carboxyvinyltransferase</fullName>
        <ecNumber evidence="1">2.5.1.19</ecNumber>
    </recommendedName>
    <alternativeName>
        <fullName evidence="1">5-enolpyruvylshikimate-3-phosphate synthase</fullName>
        <shortName evidence="1">EPSP synthase</shortName>
        <shortName evidence="1">EPSPS</shortName>
    </alternativeName>
</protein>
<comment type="function">
    <text evidence="1">Catalyzes the transfer of the enolpyruvyl moiety of phosphoenolpyruvate (PEP) to the 5-hydroxyl of shikimate-3-phosphate (S3P) to produce enolpyruvyl shikimate-3-phosphate and inorganic phosphate.</text>
</comment>
<comment type="catalytic activity">
    <reaction evidence="1">
        <text>3-phosphoshikimate + phosphoenolpyruvate = 5-O-(1-carboxyvinyl)-3-phosphoshikimate + phosphate</text>
        <dbReference type="Rhea" id="RHEA:21256"/>
        <dbReference type="ChEBI" id="CHEBI:43474"/>
        <dbReference type="ChEBI" id="CHEBI:57701"/>
        <dbReference type="ChEBI" id="CHEBI:58702"/>
        <dbReference type="ChEBI" id="CHEBI:145989"/>
        <dbReference type="EC" id="2.5.1.19"/>
    </reaction>
    <physiologicalReaction direction="left-to-right" evidence="1">
        <dbReference type="Rhea" id="RHEA:21257"/>
    </physiologicalReaction>
</comment>
<comment type="pathway">
    <text evidence="1">Metabolic intermediate biosynthesis; chorismate biosynthesis; chorismate from D-erythrose 4-phosphate and phosphoenolpyruvate: step 6/7.</text>
</comment>
<comment type="subunit">
    <text evidence="1">Monomer.</text>
</comment>
<comment type="subcellular location">
    <subcellularLocation>
        <location evidence="1">Cytoplasm</location>
    </subcellularLocation>
</comment>
<comment type="similarity">
    <text evidence="1">Belongs to the EPSP synthase family.</text>
</comment>
<sequence>MKERTIQPVNNGLNGNITIPGDKSISHRAVMFGAIAEGKTTIKGFLPGADCLSTISCFKEMGVDIVQNGDEVTVVGKGLEGLQEPKAVLDVGNSGTTIRLMSGILANTPFFSCVQGDASIAKRPMKRVTNPLKQMGANIDGREEGTFTPLTIRGGDLKAIEYTSPVASAQVKSAILLAGLRAEGVTAVTEPHISRDHTERMLEAFGVKVTREGKTVKLAGGQKLTATDVQVPGDVSSAAFFLVAGAIIPNSKLVLENVGMNPTRTGIIDVLEKMGATFTVEPINEGASEPAANITIETSSLKGIEIGGDIIPRLIDEIPVIALAATQAEGITVIKDAHELKVKETNRIDTVVAELTKLGARIEATDDGMIIYGKSVLKGNTVNSYGDHRIGMMLAIAGCLAEGKTTIEDAEAVGVSYPTFFEELQKLAK</sequence>
<keyword id="KW-0028">Amino-acid biosynthesis</keyword>
<keyword id="KW-0057">Aromatic amino acid biosynthesis</keyword>
<keyword id="KW-0963">Cytoplasm</keyword>
<keyword id="KW-0808">Transferase</keyword>